<organism>
    <name type="scientific">Streptococcus pyogenes serotype M12 (strain MGAS2096)</name>
    <dbReference type="NCBI Taxonomy" id="370553"/>
    <lineage>
        <taxon>Bacteria</taxon>
        <taxon>Bacillati</taxon>
        <taxon>Bacillota</taxon>
        <taxon>Bacilli</taxon>
        <taxon>Lactobacillales</taxon>
        <taxon>Streptococcaceae</taxon>
        <taxon>Streptococcus</taxon>
    </lineage>
</organism>
<accession>Q1JBD1</accession>
<sequence length="663" mass="75665">MIDKRDDKPFKLKSKYKPSGDQPQAIESLVDNIEGGEKAQILLGATGTGKTYTMSQVISKVNKPTLVIAHNKTLAGQLYGEFKEFFPDNAVEYFVSYYDYYQPEAYVPSSDTYIEKDSSVNDEIDKLRHSATSSLLERNDVIVVASVSCIYGLGSPKEYADSAVSLRPGQEISRDTLLNQLVDIQFERNDIDFQRGCFRVRGDVVEVFPASRDEHAFRVEFFGDEIDRICEIESLTGKTIGEVDHLVLFPATHFVTNDEHMEQSIAKIQAELAEQLQLFESEGKLLEAQRLRQRTEYDIEMLREMGYTSGVENYSRHMDGRSPGEPPYTLLDFFPEDFLIMIDESHMTMGQIKGMYNGDQARKQMLVDYGFRLPSALDNRPLRREEFESHVHQIVYVSATPGEYEMSQTNTIIEQIIRPTGLLDPEIDVRPSMGQMDDLLGEINQRVARDERTFITTLTKKMAEDLTDYLKEMGVKVKYMHSDIKTLERTEIIRDLRLGVFDVLIGINLLREGIDVPEVSLVAILDADKEGFLRNERGLIQTIGRAARNVDGHVIMYADKMTDSMQRAIDETARRREIQIAYNKAHGIVPQTIKKDIRGLISISKTSHNDISKEEMDYESMSRGERKEAINALQKQMQEAAELLDFELAAQMRDLILELKLMD</sequence>
<protein>
    <recommendedName>
        <fullName evidence="1">UvrABC system protein B</fullName>
        <shortName evidence="1">Protein UvrB</shortName>
    </recommendedName>
    <alternativeName>
        <fullName evidence="1">Excinuclease ABC subunit B</fullName>
    </alternativeName>
</protein>
<dbReference type="EMBL" id="CP000261">
    <property type="protein sequence ID" value="ABF36127.1"/>
    <property type="molecule type" value="Genomic_DNA"/>
</dbReference>
<dbReference type="SMR" id="Q1JBD1"/>
<dbReference type="KEGG" id="spj:MGAS2096_Spy1075"/>
<dbReference type="HOGENOM" id="CLU_009621_2_1_9"/>
<dbReference type="GO" id="GO:0005737">
    <property type="term" value="C:cytoplasm"/>
    <property type="evidence" value="ECO:0007669"/>
    <property type="project" value="UniProtKB-SubCell"/>
</dbReference>
<dbReference type="GO" id="GO:0009380">
    <property type="term" value="C:excinuclease repair complex"/>
    <property type="evidence" value="ECO:0007669"/>
    <property type="project" value="InterPro"/>
</dbReference>
<dbReference type="GO" id="GO:0005524">
    <property type="term" value="F:ATP binding"/>
    <property type="evidence" value="ECO:0007669"/>
    <property type="project" value="UniProtKB-UniRule"/>
</dbReference>
<dbReference type="GO" id="GO:0016887">
    <property type="term" value="F:ATP hydrolysis activity"/>
    <property type="evidence" value="ECO:0007669"/>
    <property type="project" value="InterPro"/>
</dbReference>
<dbReference type="GO" id="GO:0003677">
    <property type="term" value="F:DNA binding"/>
    <property type="evidence" value="ECO:0007669"/>
    <property type="project" value="UniProtKB-UniRule"/>
</dbReference>
<dbReference type="GO" id="GO:0009381">
    <property type="term" value="F:excinuclease ABC activity"/>
    <property type="evidence" value="ECO:0007669"/>
    <property type="project" value="UniProtKB-UniRule"/>
</dbReference>
<dbReference type="GO" id="GO:0004386">
    <property type="term" value="F:helicase activity"/>
    <property type="evidence" value="ECO:0007669"/>
    <property type="project" value="UniProtKB-KW"/>
</dbReference>
<dbReference type="GO" id="GO:0006289">
    <property type="term" value="P:nucleotide-excision repair"/>
    <property type="evidence" value="ECO:0007669"/>
    <property type="project" value="UniProtKB-UniRule"/>
</dbReference>
<dbReference type="GO" id="GO:0009432">
    <property type="term" value="P:SOS response"/>
    <property type="evidence" value="ECO:0007669"/>
    <property type="project" value="UniProtKB-UniRule"/>
</dbReference>
<dbReference type="CDD" id="cd17916">
    <property type="entry name" value="DEXHc_UvrB"/>
    <property type="match status" value="1"/>
</dbReference>
<dbReference type="CDD" id="cd18790">
    <property type="entry name" value="SF2_C_UvrB"/>
    <property type="match status" value="1"/>
</dbReference>
<dbReference type="Gene3D" id="3.40.50.300">
    <property type="entry name" value="P-loop containing nucleotide triphosphate hydrolases"/>
    <property type="match status" value="3"/>
</dbReference>
<dbReference type="Gene3D" id="4.10.860.10">
    <property type="entry name" value="UVR domain"/>
    <property type="match status" value="1"/>
</dbReference>
<dbReference type="HAMAP" id="MF_00204">
    <property type="entry name" value="UvrB"/>
    <property type="match status" value="1"/>
</dbReference>
<dbReference type="InterPro" id="IPR006935">
    <property type="entry name" value="Helicase/UvrB_N"/>
</dbReference>
<dbReference type="InterPro" id="IPR014001">
    <property type="entry name" value="Helicase_ATP-bd"/>
</dbReference>
<dbReference type="InterPro" id="IPR001650">
    <property type="entry name" value="Helicase_C-like"/>
</dbReference>
<dbReference type="InterPro" id="IPR027417">
    <property type="entry name" value="P-loop_NTPase"/>
</dbReference>
<dbReference type="InterPro" id="IPR001943">
    <property type="entry name" value="UVR_dom"/>
</dbReference>
<dbReference type="InterPro" id="IPR036876">
    <property type="entry name" value="UVR_dom_sf"/>
</dbReference>
<dbReference type="InterPro" id="IPR004807">
    <property type="entry name" value="UvrB"/>
</dbReference>
<dbReference type="InterPro" id="IPR041471">
    <property type="entry name" value="UvrB_inter"/>
</dbReference>
<dbReference type="InterPro" id="IPR024759">
    <property type="entry name" value="UvrB_YAD/RRR_dom"/>
</dbReference>
<dbReference type="NCBIfam" id="NF003673">
    <property type="entry name" value="PRK05298.1"/>
    <property type="match status" value="1"/>
</dbReference>
<dbReference type="NCBIfam" id="TIGR00631">
    <property type="entry name" value="uvrb"/>
    <property type="match status" value="1"/>
</dbReference>
<dbReference type="PANTHER" id="PTHR24029">
    <property type="entry name" value="UVRABC SYSTEM PROTEIN B"/>
    <property type="match status" value="1"/>
</dbReference>
<dbReference type="PANTHER" id="PTHR24029:SF0">
    <property type="entry name" value="UVRABC SYSTEM PROTEIN B"/>
    <property type="match status" value="1"/>
</dbReference>
<dbReference type="Pfam" id="PF00271">
    <property type="entry name" value="Helicase_C"/>
    <property type="match status" value="1"/>
</dbReference>
<dbReference type="Pfam" id="PF04851">
    <property type="entry name" value="ResIII"/>
    <property type="match status" value="1"/>
</dbReference>
<dbReference type="Pfam" id="PF02151">
    <property type="entry name" value="UVR"/>
    <property type="match status" value="1"/>
</dbReference>
<dbReference type="Pfam" id="PF12344">
    <property type="entry name" value="UvrB"/>
    <property type="match status" value="1"/>
</dbReference>
<dbReference type="Pfam" id="PF17757">
    <property type="entry name" value="UvrB_inter"/>
    <property type="match status" value="1"/>
</dbReference>
<dbReference type="SMART" id="SM00487">
    <property type="entry name" value="DEXDc"/>
    <property type="match status" value="1"/>
</dbReference>
<dbReference type="SMART" id="SM00490">
    <property type="entry name" value="HELICc"/>
    <property type="match status" value="1"/>
</dbReference>
<dbReference type="SUPFAM" id="SSF46600">
    <property type="entry name" value="C-terminal UvrC-binding domain of UvrB"/>
    <property type="match status" value="1"/>
</dbReference>
<dbReference type="SUPFAM" id="SSF52540">
    <property type="entry name" value="P-loop containing nucleoside triphosphate hydrolases"/>
    <property type="match status" value="2"/>
</dbReference>
<dbReference type="PROSITE" id="PS51192">
    <property type="entry name" value="HELICASE_ATP_BIND_1"/>
    <property type="match status" value="1"/>
</dbReference>
<dbReference type="PROSITE" id="PS51194">
    <property type="entry name" value="HELICASE_CTER"/>
    <property type="match status" value="1"/>
</dbReference>
<dbReference type="PROSITE" id="PS50151">
    <property type="entry name" value="UVR"/>
    <property type="match status" value="1"/>
</dbReference>
<reference key="1">
    <citation type="journal article" date="2006" name="Proc. Natl. Acad. Sci. U.S.A.">
        <title>Molecular genetic anatomy of inter- and intraserotype variation in the human bacterial pathogen group A Streptococcus.</title>
        <authorList>
            <person name="Beres S.B."/>
            <person name="Richter E.W."/>
            <person name="Nagiec M.J."/>
            <person name="Sumby P."/>
            <person name="Porcella S.F."/>
            <person name="DeLeo F.R."/>
            <person name="Musser J.M."/>
        </authorList>
    </citation>
    <scope>NUCLEOTIDE SEQUENCE [LARGE SCALE GENOMIC DNA]</scope>
    <source>
        <strain>MGAS2096</strain>
    </source>
</reference>
<comment type="function">
    <text evidence="1">The UvrABC repair system catalyzes the recognition and processing of DNA lesions. A damage recognition complex composed of 2 UvrA and 2 UvrB subunits scans DNA for abnormalities. Upon binding of the UvrA(2)B(2) complex to a putative damaged site, the DNA wraps around one UvrB monomer. DNA wrap is dependent on ATP binding by UvrB and probably causes local melting of the DNA helix, facilitating insertion of UvrB beta-hairpin between the DNA strands. Then UvrB probes one DNA strand for the presence of a lesion. If a lesion is found the UvrA subunits dissociate and the UvrB-DNA preincision complex is formed. This complex is subsequently bound by UvrC and the second UvrB is released. If no lesion is found, the DNA wraps around the other UvrB subunit that will check the other stand for damage.</text>
</comment>
<comment type="subunit">
    <text evidence="1">Forms a heterotetramer with UvrA during the search for lesions. Interacts with UvrC in an incision complex.</text>
</comment>
<comment type="subcellular location">
    <subcellularLocation>
        <location evidence="1">Cytoplasm</location>
    </subcellularLocation>
</comment>
<comment type="domain">
    <text evidence="1">The beta-hairpin motif is involved in DNA binding.</text>
</comment>
<comment type="similarity">
    <text evidence="1">Belongs to the UvrB family.</text>
</comment>
<proteinExistence type="inferred from homology"/>
<keyword id="KW-0067">ATP-binding</keyword>
<keyword id="KW-0963">Cytoplasm</keyword>
<keyword id="KW-0227">DNA damage</keyword>
<keyword id="KW-0228">DNA excision</keyword>
<keyword id="KW-0234">DNA repair</keyword>
<keyword id="KW-0267">Excision nuclease</keyword>
<keyword id="KW-0347">Helicase</keyword>
<keyword id="KW-0378">Hydrolase</keyword>
<keyword id="KW-0547">Nucleotide-binding</keyword>
<keyword id="KW-0742">SOS response</keyword>
<gene>
    <name evidence="1" type="primary">uvrB</name>
    <name type="ordered locus">MGAS2096_Spy1075</name>
</gene>
<feature type="chain" id="PRO_1000077926" description="UvrABC system protein B">
    <location>
        <begin position="1"/>
        <end position="663"/>
    </location>
</feature>
<feature type="domain" description="Helicase ATP-binding" evidence="1">
    <location>
        <begin position="31"/>
        <end position="271"/>
    </location>
</feature>
<feature type="domain" description="Helicase C-terminal" evidence="1">
    <location>
        <begin position="435"/>
        <end position="601"/>
    </location>
</feature>
<feature type="domain" description="UVR" evidence="1">
    <location>
        <begin position="627"/>
        <end position="662"/>
    </location>
</feature>
<feature type="region of interest" description="Disordered" evidence="2">
    <location>
        <begin position="1"/>
        <end position="23"/>
    </location>
</feature>
<feature type="short sequence motif" description="Beta-hairpin">
    <location>
        <begin position="97"/>
        <end position="120"/>
    </location>
</feature>
<feature type="compositionally biased region" description="Basic and acidic residues" evidence="2">
    <location>
        <begin position="1"/>
        <end position="10"/>
    </location>
</feature>
<feature type="binding site" evidence="1">
    <location>
        <begin position="44"/>
        <end position="51"/>
    </location>
    <ligand>
        <name>ATP</name>
        <dbReference type="ChEBI" id="CHEBI:30616"/>
    </ligand>
</feature>
<evidence type="ECO:0000255" key="1">
    <source>
        <dbReference type="HAMAP-Rule" id="MF_00204"/>
    </source>
</evidence>
<evidence type="ECO:0000256" key="2">
    <source>
        <dbReference type="SAM" id="MobiDB-lite"/>
    </source>
</evidence>
<name>UVRB_STRPB</name>